<sequence>MRAIAILLAVVATIFASLHGVSAIIAVNAEPASSIDSASTHLNFQRRLRQTGDASDEERGNTWFSAKIAKLIEQRKINAMMTKLTKGKSKDEVSKVKQAFQDNVLDELKALVEKGFAPDSFKTALEKLRPGNKGGEDLVAYFTAYWDTFHKAKKLSGVRKQKKRVPHAADV</sequence>
<proteinExistence type="evidence at transcript level"/>
<organism>
    <name type="scientific">Phytophthora infestans (strain T30-4)</name>
    <name type="common">Potato late blight agent</name>
    <dbReference type="NCBI Taxonomy" id="403677"/>
    <lineage>
        <taxon>Eukaryota</taxon>
        <taxon>Sar</taxon>
        <taxon>Stramenopiles</taxon>
        <taxon>Oomycota</taxon>
        <taxon>Peronosporales</taxon>
        <taxon>Peronosporaceae</taxon>
        <taxon>Phytophthora</taxon>
    </lineage>
</organism>
<comment type="function">
    <text evidence="2">Effector that is involved in host plant infection. Contributes to virulence during the early infection stage, by inhibiting plant defense responses induced by both PAMP-triggered immunity (PTI) and effector-triggered immunity (ETI).</text>
</comment>
<comment type="subcellular location">
    <subcellularLocation>
        <location evidence="5">Secreted</location>
    </subcellularLocation>
    <subcellularLocation>
        <location evidence="5">Host cell</location>
    </subcellularLocation>
</comment>
<comment type="induction">
    <text evidence="2">Expression is induced during host plant infection.</text>
</comment>
<comment type="domain">
    <text evidence="5">The RxLR-dEER motif acts to carry the protein into the host cell cytoplasm through binding to cell surface phosphatidylinositol-3-phosphate.</text>
</comment>
<comment type="similarity">
    <text evidence="4">Belongs to the RxLR effector family.</text>
</comment>
<reference key="1">
    <citation type="journal article" date="2009" name="Nature">
        <title>Genome sequence and analysis of the Irish potato famine pathogen Phytophthora infestans.</title>
        <authorList>
            <consortium name="The Broad Institute Genome Sequencing Platform"/>
            <person name="Haas B.J."/>
            <person name="Kamoun S."/>
            <person name="Zody M.C."/>
            <person name="Jiang R.H."/>
            <person name="Handsaker R.E."/>
            <person name="Cano L.M."/>
            <person name="Grabherr M."/>
            <person name="Kodira C.D."/>
            <person name="Raffaele S."/>
            <person name="Torto-Alalibo T."/>
            <person name="Bozkurt T.O."/>
            <person name="Ah-Fong A.M."/>
            <person name="Alvarado L."/>
            <person name="Anderson V.L."/>
            <person name="Armstrong M.R."/>
            <person name="Avrova A."/>
            <person name="Baxter L."/>
            <person name="Beynon J."/>
            <person name="Boevink P.C."/>
            <person name="Bollmann S.R."/>
            <person name="Bos J.I."/>
            <person name="Bulone V."/>
            <person name="Cai G."/>
            <person name="Cakir C."/>
            <person name="Carrington J.C."/>
            <person name="Chawner M."/>
            <person name="Conti L."/>
            <person name="Costanzo S."/>
            <person name="Ewan R."/>
            <person name="Fahlgren N."/>
            <person name="Fischbach M.A."/>
            <person name="Fugelstad J."/>
            <person name="Gilroy E.M."/>
            <person name="Gnerre S."/>
            <person name="Green P.J."/>
            <person name="Grenville-Briggs L.J."/>
            <person name="Griffith J."/>
            <person name="Grunwald N.J."/>
            <person name="Horn K."/>
            <person name="Horner N.R."/>
            <person name="Hu C.H."/>
            <person name="Huitema E."/>
            <person name="Jeong D.H."/>
            <person name="Jones A.M."/>
            <person name="Jones J.D."/>
            <person name="Jones R.W."/>
            <person name="Karlsson E.K."/>
            <person name="Kunjeti S.G."/>
            <person name="Lamour K."/>
            <person name="Liu Z."/>
            <person name="Ma L."/>
            <person name="Maclean D."/>
            <person name="Chibucos M.C."/>
            <person name="McDonald H."/>
            <person name="McWalters J."/>
            <person name="Meijer H.J."/>
            <person name="Morgan W."/>
            <person name="Morris P.F."/>
            <person name="Munro C.A."/>
            <person name="O'Neill K."/>
            <person name="Ospina-Giraldo M."/>
            <person name="Pinzon A."/>
            <person name="Pritchard L."/>
            <person name="Ramsahoye B."/>
            <person name="Ren Q."/>
            <person name="Restrepo S."/>
            <person name="Roy S."/>
            <person name="Sadanandom A."/>
            <person name="Savidor A."/>
            <person name="Schornack S."/>
            <person name="Schwartz D.C."/>
            <person name="Schumann U.D."/>
            <person name="Schwessinger B."/>
            <person name="Seyer L."/>
            <person name="Sharpe T."/>
            <person name="Silvar C."/>
            <person name="Song J."/>
            <person name="Studholme D.J."/>
            <person name="Sykes S."/>
            <person name="Thines M."/>
            <person name="van de Vondervoort P.J."/>
            <person name="Phuntumart V."/>
            <person name="Wawra S."/>
            <person name="Weide R."/>
            <person name="Win J."/>
            <person name="Young C."/>
            <person name="Zhou S."/>
            <person name="Fry W."/>
            <person name="Meyers B.C."/>
            <person name="van West P."/>
            <person name="Ristaino J."/>
            <person name="Govers F."/>
            <person name="Birch P.R."/>
            <person name="Whisson S.C."/>
            <person name="Judelson H.S."/>
            <person name="Nusbaum C."/>
        </authorList>
    </citation>
    <scope>NUCLEOTIDE SEQUENCE [LARGE SCALE GENOMIC DNA]</scope>
    <source>
        <strain>T30-4</strain>
    </source>
</reference>
<reference key="2">
    <citation type="journal article" date="2017" name="Front. Plant Sci.">
        <title>Conserved RXLR effector genes of Phytophthora infestans expressed at the early stage of potato infection are suppressive to host defense.</title>
        <authorList>
            <person name="Yin J."/>
            <person name="Gu B."/>
            <person name="Huang G."/>
            <person name="Tian Y."/>
            <person name="Quan J."/>
            <person name="Lindqvist-Kreuze H."/>
            <person name="Shan W."/>
        </authorList>
    </citation>
    <scope>INDUCTION</scope>
    <scope>DOMAIN</scope>
    <scope>FUNCTION</scope>
</reference>
<protein>
    <recommendedName>
        <fullName evidence="3">RxLR effector protein CRE7</fullName>
    </recommendedName>
    <alternativeName>
        <fullName evidence="3">Core RXLR effector 7</fullName>
    </alternativeName>
</protein>
<gene>
    <name evidence="3" type="primary">CRE7</name>
    <name type="ORF">PITG_08133</name>
</gene>
<feature type="signal peptide" evidence="1">
    <location>
        <begin position="1"/>
        <end position="23"/>
    </location>
</feature>
<feature type="chain" id="PRO_5003013119" description="RxLR effector protein CRE7">
    <location>
        <begin position="24"/>
        <end position="171"/>
    </location>
</feature>
<feature type="short sequence motif" description="RxLR-dEER" evidence="5">
    <location>
        <begin position="46"/>
        <end position="59"/>
    </location>
</feature>
<accession>D0N9J3</accession>
<evidence type="ECO:0000255" key="1"/>
<evidence type="ECO:0000269" key="2">
    <source>
    </source>
</evidence>
<evidence type="ECO:0000303" key="3">
    <source>
    </source>
</evidence>
<evidence type="ECO:0000305" key="4"/>
<evidence type="ECO:0000305" key="5">
    <source>
    </source>
</evidence>
<name>CRE7_PHYIT</name>
<keyword id="KW-1185">Reference proteome</keyword>
<keyword id="KW-0964">Secreted</keyword>
<keyword id="KW-0732">Signal</keyword>
<keyword id="KW-0843">Virulence</keyword>
<dbReference type="EMBL" id="DS028129">
    <property type="protein sequence ID" value="EEY54481.1"/>
    <property type="molecule type" value="Genomic_DNA"/>
</dbReference>
<dbReference type="RefSeq" id="XP_002904303.1">
    <property type="nucleotide sequence ID" value="XM_002904257.1"/>
</dbReference>
<dbReference type="EnsemblProtists" id="PITG_08133T0">
    <property type="protein sequence ID" value="PITG_08133T0"/>
    <property type="gene ID" value="PITG_08133"/>
</dbReference>
<dbReference type="GeneID" id="9472813"/>
<dbReference type="KEGG" id="pif:PITG_08133"/>
<dbReference type="VEuPathDB" id="FungiDB:PITG_08133"/>
<dbReference type="HOGENOM" id="CLU_1565932_0_0_1"/>
<dbReference type="InParanoid" id="D0N9J3"/>
<dbReference type="Proteomes" id="UP000006643">
    <property type="component" value="Partially assembled WGS sequence"/>
</dbReference>
<dbReference type="GO" id="GO:0005576">
    <property type="term" value="C:extracellular region"/>
    <property type="evidence" value="ECO:0007669"/>
    <property type="project" value="UniProtKB-SubCell"/>
</dbReference>
<dbReference type="GO" id="GO:0043657">
    <property type="term" value="C:host cell"/>
    <property type="evidence" value="ECO:0007669"/>
    <property type="project" value="UniProtKB-SubCell"/>
</dbReference>